<accession>Q9ES07</accession>
<comment type="function">
    <text evidence="1 2 3 7 8">Proton-coupled amino-acid transporter that transports oligopeptides of 2 to 4 amino acids with a preference for dipeptides (PubMed:11027540). Transports neutral and anionic dipeptides with a proton to peptide stoichiometry of 2:1 or 3:1 (By similarity). In kidney, involved in the absorption of circulating di- and tripeptides from the glomerular filtrate. Can also transport beta-lactam antibiotics, such as the aminocephalosporin cefadroxil, and other antiviral and anticancer drugs (By similarity). Transports the dipeptide-like aminopeptidase inhibitor bestatin (By similarity). Also able to transport carnosine (By similarity). Involved in innate immunity by promoting the detection of microbial pathogens by NOD-like receptors (NLRs) (PubMed:29784761). Mediates transport of bacterial peptidoglycans across the plasma membrane or, in macrophages, the phagosome membrane: catalyzes the transport of certain bacterial peptidoglycans, such as muramyl dipeptide (MDP), the NOD2 ligand (PubMed:29784761).</text>
</comment>
<comment type="catalytic activity">
    <reaction evidence="8">
        <text>N-acetyl-D-muramoyl-L-alanyl-D-isoglutamine(out) + 3 H(+)(out) = N-acetyl-D-muramoyl-L-alanyl-D-isoglutamine(in) + 3 H(+)(in)</text>
        <dbReference type="Rhea" id="RHEA:76375"/>
        <dbReference type="ChEBI" id="CHEBI:15378"/>
        <dbReference type="ChEBI" id="CHEBI:155830"/>
    </reaction>
    <physiologicalReaction direction="left-to-right" evidence="11">
        <dbReference type="Rhea" id="RHEA:76376"/>
    </physiologicalReaction>
</comment>
<comment type="catalytic activity">
    <reaction evidence="7 8">
        <text>a dipeptide(out) + 2 H(+)(out) = a dipeptide(in) + 2 H(+)(in)</text>
        <dbReference type="Rhea" id="RHEA:76179"/>
        <dbReference type="ChEBI" id="CHEBI:15378"/>
        <dbReference type="ChEBI" id="CHEBI:90799"/>
    </reaction>
    <physiologicalReaction direction="left-to-right" evidence="7 8">
        <dbReference type="Rhea" id="RHEA:76180"/>
    </physiologicalReaction>
</comment>
<comment type="catalytic activity">
    <reaction evidence="3">
        <text>glycyl-L-leucine(out) + 2 H(+)(out) = glycyl-L-leucine(in) + 2 H(+)(in)</text>
        <dbReference type="Rhea" id="RHEA:76167"/>
        <dbReference type="ChEBI" id="CHEBI:15378"/>
        <dbReference type="ChEBI" id="CHEBI:143163"/>
    </reaction>
    <physiologicalReaction direction="left-to-right" evidence="3">
        <dbReference type="Rhea" id="RHEA:76168"/>
    </physiologicalReaction>
</comment>
<comment type="catalytic activity">
    <reaction evidence="3">
        <text>glycyl-L-lysine(out) + 2 H(+)(out) = glycyl-L-lysine(in) + 2 H(+)(in)</text>
        <dbReference type="Rhea" id="RHEA:76171"/>
        <dbReference type="ChEBI" id="CHEBI:15378"/>
        <dbReference type="ChEBI" id="CHEBI:194323"/>
    </reaction>
    <physiologicalReaction direction="left-to-right" evidence="3">
        <dbReference type="Rhea" id="RHEA:76172"/>
    </physiologicalReaction>
</comment>
<comment type="catalytic activity">
    <reaction evidence="3">
        <text>glycyl-L-glutamate(out) + 3 H(+)(out) = glycyl-L-glutamate(in) + 3 H(+)(in)</text>
        <dbReference type="Rhea" id="RHEA:76175"/>
        <dbReference type="ChEBI" id="CHEBI:15378"/>
        <dbReference type="ChEBI" id="CHEBI:73784"/>
    </reaction>
    <physiologicalReaction direction="left-to-right" evidence="3">
        <dbReference type="Rhea" id="RHEA:76176"/>
    </physiologicalReaction>
</comment>
<comment type="catalytic activity">
    <reaction evidence="3">
        <text>L-alanyl-L-alanine(out) + 2 H(+)(out) = L-alanyl-L-alanine(in) + 2 H(+)(in)</text>
        <dbReference type="Rhea" id="RHEA:76183"/>
        <dbReference type="ChEBI" id="CHEBI:15378"/>
        <dbReference type="ChEBI" id="CHEBI:195181"/>
    </reaction>
    <physiologicalReaction direction="left-to-right" evidence="3">
        <dbReference type="Rhea" id="RHEA:76184"/>
    </physiologicalReaction>
</comment>
<comment type="catalytic activity">
    <reaction evidence="3">
        <text>an L-amino acid tripeptide(out) + 2 H(+)(out) = an L-amino acid tripeptide(in) + 2 H(+)(in)</text>
        <dbReference type="Rhea" id="RHEA:76187"/>
        <dbReference type="ChEBI" id="CHEBI:15378"/>
        <dbReference type="ChEBI" id="CHEBI:155837"/>
    </reaction>
    <physiologicalReaction direction="left-to-right" evidence="3">
        <dbReference type="Rhea" id="RHEA:76188"/>
    </physiologicalReaction>
</comment>
<comment type="catalytic activity">
    <reaction evidence="2">
        <text>carnosine(out) + 2 H(+)(out) = carnosine(in) + 2 H(+)(in)</text>
        <dbReference type="Rhea" id="RHEA:76191"/>
        <dbReference type="ChEBI" id="CHEBI:15378"/>
        <dbReference type="ChEBI" id="CHEBI:57485"/>
    </reaction>
    <physiologicalReaction direction="left-to-right" evidence="2">
        <dbReference type="Rhea" id="RHEA:76192"/>
    </physiologicalReaction>
</comment>
<comment type="biophysicochemical properties">
    <kinetics>
        <KM evidence="7">56.6 uM for D-Phe-Ala (at pH 6.0)</KM>
    </kinetics>
    <phDependence>
        <text evidence="7">Optimum pH is 6.0 or lower.</text>
    </phDependence>
</comment>
<comment type="subunit">
    <text evidence="3">Interacts (via extracellular domain region) with trypsin.</text>
</comment>
<comment type="subcellular location">
    <subcellularLocation>
        <location evidence="3">Apical cell membrane</location>
        <topology evidence="4">Multi-pass membrane protein</topology>
    </subcellularLocation>
    <subcellularLocation>
        <location evidence="2">Cytoplasmic vesicle</location>
        <location evidence="2">Phagosome membrane</location>
        <topology evidence="4">Multi-pass membrane protein</topology>
    </subcellularLocation>
    <subcellularLocation>
        <location evidence="7 8">Cell membrane</location>
        <topology evidence="4">Multi-pass membrane protein</topology>
    </subcellularLocation>
    <text evidence="2">Associated with the cell membrane in resting macrophages and enriched in phagocytic cups and phagosomes after particle internalization.</text>
</comment>
<comment type="tissue specificity">
    <text evidence="7 8">Expressed in kidney brush border cells (at protein level) (PubMed:11027540). Highly expressed in macrophages (PubMed:29784761).</text>
</comment>
<comment type="domain">
    <text evidence="3">The extracellular domain (ECD) region specifically binds trypsin.</text>
</comment>
<comment type="disruption phenotype">
    <text evidence="8">Decreased dipeptide uptake in bone marrow (PubMed:29784761). Decreased cytokine expression in response to LPS stimulation (PubMed:29784761).</text>
</comment>
<comment type="similarity">
    <text evidence="10">Belongs to the major facilitator superfamily. Proton-dependent oligopeptide transporter (POT/PTR) (TC 2.A.17) family.</text>
</comment>
<name>S15A2_MOUSE</name>
<dbReference type="EMBL" id="AF257711">
    <property type="protein sequence ID" value="AAG25926.1"/>
    <property type="molecule type" value="Genomic_DNA"/>
</dbReference>
<dbReference type="PIR" id="JC7501">
    <property type="entry name" value="JC7501"/>
</dbReference>
<dbReference type="SMR" id="Q9ES07"/>
<dbReference type="FunCoup" id="Q9ES07">
    <property type="interactions" value="204"/>
</dbReference>
<dbReference type="STRING" id="10090.ENSMUSP00000023616"/>
<dbReference type="ChEMBL" id="CHEMBL2073678"/>
<dbReference type="TCDB" id="2.A.17.4.4">
    <property type="family name" value="the proton-dependent oligopeptide transporter (pot/ptr) family"/>
</dbReference>
<dbReference type="GlyCosmos" id="Q9ES07">
    <property type="glycosylation" value="4 sites, No reported glycans"/>
</dbReference>
<dbReference type="GlyGen" id="Q9ES07">
    <property type="glycosylation" value="5 sites, 4 N-linked glycans (4 sites)"/>
</dbReference>
<dbReference type="iPTMnet" id="Q9ES07"/>
<dbReference type="PhosphoSitePlus" id="Q9ES07"/>
<dbReference type="SwissPalm" id="Q9ES07"/>
<dbReference type="jPOST" id="Q9ES07"/>
<dbReference type="PaxDb" id="10090-ENSMUSP00000023616"/>
<dbReference type="ProteomicsDB" id="253352"/>
<dbReference type="AGR" id="MGI:1890457"/>
<dbReference type="MGI" id="MGI:1890457">
    <property type="gene designation" value="Slc15a2"/>
</dbReference>
<dbReference type="eggNOG" id="KOG1237">
    <property type="taxonomic scope" value="Eukaryota"/>
</dbReference>
<dbReference type="InParanoid" id="Q9ES07"/>
<dbReference type="PhylomeDB" id="Q9ES07"/>
<dbReference type="ChiTaRS" id="Slc15a2">
    <property type="organism name" value="mouse"/>
</dbReference>
<dbReference type="PRO" id="PR:Q9ES07"/>
<dbReference type="Proteomes" id="UP000000589">
    <property type="component" value="Unplaced"/>
</dbReference>
<dbReference type="RNAct" id="Q9ES07">
    <property type="molecule type" value="protein"/>
</dbReference>
<dbReference type="GO" id="GO:0016324">
    <property type="term" value="C:apical plasma membrane"/>
    <property type="evidence" value="ECO:0000250"/>
    <property type="project" value="UniProtKB"/>
</dbReference>
<dbReference type="GO" id="GO:0016020">
    <property type="term" value="C:membrane"/>
    <property type="evidence" value="ECO:0000314"/>
    <property type="project" value="MGI"/>
</dbReference>
<dbReference type="GO" id="GO:0030670">
    <property type="term" value="C:phagocytic vesicle membrane"/>
    <property type="evidence" value="ECO:0007669"/>
    <property type="project" value="UniProtKB-SubCell"/>
</dbReference>
<dbReference type="GO" id="GO:0005886">
    <property type="term" value="C:plasma membrane"/>
    <property type="evidence" value="ECO:0000314"/>
    <property type="project" value="MGI"/>
</dbReference>
<dbReference type="GO" id="GO:0071916">
    <property type="term" value="F:dipeptide transmembrane transporter activity"/>
    <property type="evidence" value="ECO:0000315"/>
    <property type="project" value="UniProtKB"/>
</dbReference>
<dbReference type="GO" id="GO:0015334">
    <property type="term" value="F:high-affinity oligopeptide transmembrane transporter activity"/>
    <property type="evidence" value="ECO:0000314"/>
    <property type="project" value="MGI"/>
</dbReference>
<dbReference type="GO" id="GO:0015333">
    <property type="term" value="F:peptide:proton symporter activity"/>
    <property type="evidence" value="ECO:0000250"/>
    <property type="project" value="UniProtKB"/>
</dbReference>
<dbReference type="GO" id="GO:0042937">
    <property type="term" value="F:tripeptide transmembrane transporter activity"/>
    <property type="evidence" value="ECO:0000250"/>
    <property type="project" value="UniProtKB"/>
</dbReference>
<dbReference type="GO" id="GO:0140206">
    <property type="term" value="P:dipeptide import across plasma membrane"/>
    <property type="evidence" value="ECO:0000315"/>
    <property type="project" value="UniProtKB"/>
</dbReference>
<dbReference type="GO" id="GO:0042938">
    <property type="term" value="P:dipeptide transport"/>
    <property type="evidence" value="ECO:0000315"/>
    <property type="project" value="ARUK-UCL"/>
</dbReference>
<dbReference type="GO" id="GO:0045087">
    <property type="term" value="P:innate immune response"/>
    <property type="evidence" value="ECO:0007669"/>
    <property type="project" value="UniProtKB-KW"/>
</dbReference>
<dbReference type="GO" id="GO:0006857">
    <property type="term" value="P:oligopeptide transport"/>
    <property type="evidence" value="ECO:0000314"/>
    <property type="project" value="MGI"/>
</dbReference>
<dbReference type="GO" id="GO:0015835">
    <property type="term" value="P:peptidoglycan transport"/>
    <property type="evidence" value="ECO:0000315"/>
    <property type="project" value="UniProtKB"/>
</dbReference>
<dbReference type="GO" id="GO:0015031">
    <property type="term" value="P:protein transport"/>
    <property type="evidence" value="ECO:0007669"/>
    <property type="project" value="UniProtKB-KW"/>
</dbReference>
<dbReference type="GO" id="GO:0070424">
    <property type="term" value="P:regulation of nucleotide-binding domain, leucine rich repeat containing receptor signaling pathway"/>
    <property type="evidence" value="ECO:0000315"/>
    <property type="project" value="UniProtKB"/>
</dbReference>
<dbReference type="GO" id="GO:0070293">
    <property type="term" value="P:renal absorption"/>
    <property type="evidence" value="ECO:0000315"/>
    <property type="project" value="ARUK-UCL"/>
</dbReference>
<dbReference type="GO" id="GO:0140207">
    <property type="term" value="P:tripeptide import across plasma membrane"/>
    <property type="evidence" value="ECO:0000250"/>
    <property type="project" value="UniProtKB"/>
</dbReference>
<dbReference type="GO" id="GO:0042908">
    <property type="term" value="P:xenobiotic transport"/>
    <property type="evidence" value="ECO:0000315"/>
    <property type="project" value="ARUK-UCL"/>
</dbReference>
<dbReference type="CDD" id="cd17347">
    <property type="entry name" value="MFS_SLC15A1_2_like"/>
    <property type="match status" value="1"/>
</dbReference>
<dbReference type="FunFam" id="1.20.1250.20:FF:000049">
    <property type="entry name" value="Solute carrier family 15 member 2"/>
    <property type="match status" value="1"/>
</dbReference>
<dbReference type="FunFam" id="1.20.1250.20:FF:000158">
    <property type="entry name" value="Solute carrier family 15 member 2"/>
    <property type="match status" value="1"/>
</dbReference>
<dbReference type="Gene3D" id="1.20.1250.20">
    <property type="entry name" value="MFS general substrate transporter like domains"/>
    <property type="match status" value="2"/>
</dbReference>
<dbReference type="InterPro" id="IPR029028">
    <property type="entry name" value="Alpha/beta_knot_MTases"/>
</dbReference>
<dbReference type="InterPro" id="IPR036259">
    <property type="entry name" value="MFS_trans_sf"/>
</dbReference>
<dbReference type="InterPro" id="IPR004768">
    <property type="entry name" value="Oligopep_transport"/>
</dbReference>
<dbReference type="InterPro" id="IPR000109">
    <property type="entry name" value="POT_fam"/>
</dbReference>
<dbReference type="InterPro" id="IPR018456">
    <property type="entry name" value="PTR2_symporter_CS"/>
</dbReference>
<dbReference type="NCBIfam" id="TIGR00926">
    <property type="entry name" value="2A1704"/>
    <property type="match status" value="1"/>
</dbReference>
<dbReference type="PANTHER" id="PTHR11654">
    <property type="entry name" value="OLIGOPEPTIDE TRANSPORTER-RELATED"/>
    <property type="match status" value="1"/>
</dbReference>
<dbReference type="Pfam" id="PF00854">
    <property type="entry name" value="PTR2"/>
    <property type="match status" value="2"/>
</dbReference>
<dbReference type="SUPFAM" id="SSF75217">
    <property type="entry name" value="alpha/beta knot"/>
    <property type="match status" value="1"/>
</dbReference>
<dbReference type="SUPFAM" id="SSF103473">
    <property type="entry name" value="MFS general substrate transporter"/>
    <property type="match status" value="1"/>
</dbReference>
<dbReference type="PROSITE" id="PS01022">
    <property type="entry name" value="PTR2_1"/>
    <property type="match status" value="1"/>
</dbReference>
<dbReference type="PROSITE" id="PS01023">
    <property type="entry name" value="PTR2_2"/>
    <property type="match status" value="1"/>
</dbReference>
<gene>
    <name evidence="12" type="primary">Slc15a2</name>
    <name evidence="9" type="synonym">Pept2</name>
</gene>
<feature type="chain" id="PRO_0000064309" description="Solute carrier family 15 member 2">
    <location>
        <begin position="1"/>
        <end position="729"/>
    </location>
</feature>
<feature type="topological domain" description="Cytoplasmic" evidence="10">
    <location>
        <begin position="1"/>
        <end position="57"/>
    </location>
</feature>
<feature type="transmembrane region" description="Helical" evidence="4">
    <location>
        <begin position="58"/>
        <end position="78"/>
    </location>
</feature>
<feature type="topological domain" description="Extracellular" evidence="10">
    <location>
        <begin position="79"/>
        <end position="87"/>
    </location>
</feature>
<feature type="transmembrane region" description="Helical" evidence="4">
    <location>
        <begin position="88"/>
        <end position="108"/>
    </location>
</feature>
<feature type="topological domain" description="Cytoplasmic" evidence="10">
    <location>
        <begin position="109"/>
        <end position="113"/>
    </location>
</feature>
<feature type="transmembrane region" description="Helical" evidence="4">
    <location>
        <begin position="114"/>
        <end position="134"/>
    </location>
</feature>
<feature type="topological domain" description="Extracellular" evidence="10">
    <location>
        <begin position="135"/>
        <end position="139"/>
    </location>
</feature>
<feature type="transmembrane region" description="Helical" evidence="4">
    <location>
        <begin position="140"/>
        <end position="160"/>
    </location>
</feature>
<feature type="topological domain" description="Cytoplasmic" evidence="10">
    <location>
        <begin position="161"/>
        <end position="183"/>
    </location>
</feature>
<feature type="transmembrane region" description="Helical" evidence="4">
    <location>
        <begin position="184"/>
        <end position="204"/>
    </location>
</feature>
<feature type="topological domain" description="Extracellular" evidence="10">
    <location>
        <begin position="205"/>
        <end position="217"/>
    </location>
</feature>
<feature type="transmembrane region" description="Helical" evidence="4">
    <location>
        <begin position="218"/>
        <end position="238"/>
    </location>
</feature>
<feature type="topological domain" description="Cytoplasmic" evidence="10">
    <location>
        <begin position="239"/>
        <end position="295"/>
    </location>
</feature>
<feature type="transmembrane region" description="Helical" evidence="4">
    <location>
        <begin position="296"/>
        <end position="316"/>
    </location>
</feature>
<feature type="topological domain" description="Extracellular" evidence="10">
    <location>
        <begin position="317"/>
        <end position="343"/>
    </location>
</feature>
<feature type="transmembrane region" description="Helical" evidence="4">
    <location>
        <begin position="344"/>
        <end position="364"/>
    </location>
</feature>
<feature type="topological domain" description="Cytoplasmic" evidence="10">
    <location>
        <begin position="365"/>
        <end position="380"/>
    </location>
</feature>
<feature type="transmembrane region" description="Helical" evidence="4">
    <location>
        <begin position="381"/>
        <end position="401"/>
    </location>
</feature>
<feature type="topological domain" description="Extracellular" evidence="10">
    <location>
        <begin position="402"/>
        <end position="611"/>
    </location>
</feature>
<feature type="transmembrane region" description="Helical" evidence="4">
    <location>
        <begin position="612"/>
        <end position="632"/>
    </location>
</feature>
<feature type="topological domain" description="Cytoplasmic" evidence="10">
    <location>
        <begin position="633"/>
        <end position="643"/>
    </location>
</feature>
<feature type="transmembrane region" description="Helical" evidence="4">
    <location>
        <begin position="644"/>
        <end position="664"/>
    </location>
</feature>
<feature type="topological domain" description="Extracellular" evidence="10">
    <location>
        <begin position="665"/>
        <end position="674"/>
    </location>
</feature>
<feature type="transmembrane region" description="Helical" evidence="4">
    <location>
        <begin position="675"/>
        <end position="695"/>
    </location>
</feature>
<feature type="topological domain" description="Cytoplasmic" evidence="10">
    <location>
        <begin position="696"/>
        <end position="729"/>
    </location>
</feature>
<feature type="region of interest" description="Disordered" evidence="6">
    <location>
        <begin position="1"/>
        <end position="34"/>
    </location>
</feature>
<feature type="region of interest" description="Extracellular domain (ECD)" evidence="3">
    <location>
        <begin position="402"/>
        <end position="611"/>
    </location>
</feature>
<feature type="modified residue" description="Phosphoserine" evidence="13">
    <location>
        <position position="9"/>
    </location>
</feature>
<feature type="modified residue" description="Phosphothreonine" evidence="13">
    <location>
        <position position="12"/>
    </location>
</feature>
<feature type="modified residue" description="Phosphoserine" evidence="3">
    <location>
        <position position="28"/>
    </location>
</feature>
<feature type="glycosylation site" description="N-linked (GlcNAc...) asparagine" evidence="5">
    <location>
        <position position="448"/>
    </location>
</feature>
<feature type="glycosylation site" description="N-linked (GlcNAc...) asparagine" evidence="5">
    <location>
        <position position="472"/>
    </location>
</feature>
<feature type="glycosylation site" description="N-linked (GlcNAc...) asparagine" evidence="5">
    <location>
        <position position="528"/>
    </location>
</feature>
<feature type="glycosylation site" description="N-linked (GlcNAc...) asparagine" evidence="5">
    <location>
        <position position="587"/>
    </location>
</feature>
<evidence type="ECO:0000250" key="1">
    <source>
        <dbReference type="UniProtKB" id="P46029"/>
    </source>
</evidence>
<evidence type="ECO:0000250" key="2">
    <source>
        <dbReference type="UniProtKB" id="Q16348"/>
    </source>
</evidence>
<evidence type="ECO:0000250" key="3">
    <source>
        <dbReference type="UniProtKB" id="Q63424"/>
    </source>
</evidence>
<evidence type="ECO:0000255" key="4"/>
<evidence type="ECO:0000255" key="5">
    <source>
        <dbReference type="PROSITE-ProRule" id="PRU00498"/>
    </source>
</evidence>
<evidence type="ECO:0000256" key="6">
    <source>
        <dbReference type="SAM" id="MobiDB-lite"/>
    </source>
</evidence>
<evidence type="ECO:0000269" key="7">
    <source>
    </source>
</evidence>
<evidence type="ECO:0000269" key="8">
    <source>
    </source>
</evidence>
<evidence type="ECO:0000303" key="9">
    <source>
    </source>
</evidence>
<evidence type="ECO:0000305" key="10"/>
<evidence type="ECO:0000305" key="11">
    <source>
    </source>
</evidence>
<evidence type="ECO:0000312" key="12">
    <source>
        <dbReference type="MGI" id="MGI:1890457"/>
    </source>
</evidence>
<evidence type="ECO:0007744" key="13">
    <source>
    </source>
</evidence>
<sequence>MNPFQKNESKETLFSPVSTEEMLPGPPSPPKKSTPKLFGSSYPLSIAFIVVNEFCERFSYYGMKAVLTLYFLYFLHWNEDTSTSVYHAFSSLCYFTPILGAAIADSWLGKFKTIIYLSLVYVLGHVFKSLGAIPILGGKMLHTILSLVGLSLIALGTGGIKPCVAAFGGDQFEEEHAEARTRYFSVFYLSINAGSLISTFITPMLRGDVKCFGEDCYALAFGIPGLLMVLALVVFAMGSKMYRKPPPEGNIVAQVTKCIWFAICNRFRNRSEDIPKRQHWLDWAAEKYPKHLIMDVKALTRILFLYIPLPMFWALLDQQGSRWTLQANKMDGDLGFFVLQPDQMQVLNPFLVLVFIPLFDLVIYRLISKCGVNFSSLRKMAVGMILACLAFAVAALVEIKINGMIHPQPASQEIFLQVLNLADGEIEVTVQGNRNNPLLVESISSFQNTTHYSKLRLETKSQDLHFHLKYNNLSVHNEYSVEEKNCYQLVVHENGESLSSMLVKDTGIKPANGMTAIRFINTLHKDMNISLDANAPLSVGKDYGVSEYRTVQRGKYPAVHCETEDNVFSLNLGQLDFGTTYLFVITNITNRGLQAWKAEDIPANKLSIAWQLPQYVLVTAAEVMFSVTGLEFSYSQAPSSMKSVLQAAWLLTVAVGNIIVLIVAQFSGLVQWAEFVLFSCLLLVVCLIFSVMGYYYVPLKSEGIHEATEKQIPHIQGNMINLETKNTRL</sequence>
<reference key="1">
    <citation type="journal article" date="2000" name="Biochem. Biophys. Res. Commun.">
        <title>Cloning and characterization of the gene encoding the mouse peptide transporter PEPT2.</title>
        <authorList>
            <person name="Rubio-Aliaga I."/>
            <person name="Boll M."/>
            <person name="Daniel H."/>
        </authorList>
    </citation>
    <scope>NUCLEOTIDE SEQUENCE [MRNA]</scope>
    <scope>FUNCTION</scope>
    <scope>TRANSPORTER ACTIVITY</scope>
    <scope>BIOPHYSICOCHEMICAL PROPERTIES</scope>
    <scope>SUBCELLULAR LOCATION</scope>
    <scope>TISSUE SPECIFICITY</scope>
    <source>
        <strain>129/SvEvTacfBr</strain>
    </source>
</reference>
<reference key="2">
    <citation type="journal article" date="2010" name="Cell">
        <title>A tissue-specific atlas of mouse protein phosphorylation and expression.</title>
        <authorList>
            <person name="Huttlin E.L."/>
            <person name="Jedrychowski M.P."/>
            <person name="Elias J.E."/>
            <person name="Goswami T."/>
            <person name="Rad R."/>
            <person name="Beausoleil S.A."/>
            <person name="Villen J."/>
            <person name="Haas W."/>
            <person name="Sowa M.E."/>
            <person name="Gygi S.P."/>
        </authorList>
    </citation>
    <scope>PHOSPHORYLATION [LARGE SCALE ANALYSIS] AT SER-9 AND THR-12</scope>
    <scope>IDENTIFICATION BY MASS SPECTROMETRY [LARGE SCALE ANALYSIS]</scope>
    <source>
        <tissue>Brain</tissue>
        <tissue>Kidney</tissue>
    </source>
</reference>
<reference key="3">
    <citation type="journal article" date="2018" name="J. Immunol.">
        <title>SLC15A2 and SLC15A4 mediate the transport of bacterially derived di/tripeptides to enhance the nucleotide-binding oligomerization domain-dependent immune response in mouse bone marrow-derived macrophages.</title>
        <authorList>
            <person name="Hu Y."/>
            <person name="Song F."/>
            <person name="Jiang H."/>
            <person name="Nunez G."/>
            <person name="Smith D.E."/>
        </authorList>
    </citation>
    <scope>FUNCTION</scope>
    <scope>TRANSPORTER ACTIVITY</scope>
    <scope>SUBCELLULAR LOCATION</scope>
    <scope>DISRUPTION PHENOTYPE</scope>
    <scope>TISSUE SPECIFICITY</scope>
</reference>
<organism>
    <name type="scientific">Mus musculus</name>
    <name type="common">Mouse</name>
    <dbReference type="NCBI Taxonomy" id="10090"/>
    <lineage>
        <taxon>Eukaryota</taxon>
        <taxon>Metazoa</taxon>
        <taxon>Chordata</taxon>
        <taxon>Craniata</taxon>
        <taxon>Vertebrata</taxon>
        <taxon>Euteleostomi</taxon>
        <taxon>Mammalia</taxon>
        <taxon>Eutheria</taxon>
        <taxon>Euarchontoglires</taxon>
        <taxon>Glires</taxon>
        <taxon>Rodentia</taxon>
        <taxon>Myomorpha</taxon>
        <taxon>Muroidea</taxon>
        <taxon>Muridae</taxon>
        <taxon>Murinae</taxon>
        <taxon>Mus</taxon>
        <taxon>Mus</taxon>
    </lineage>
</organism>
<protein>
    <recommendedName>
        <fullName evidence="10">Solute carrier family 15 member 2</fullName>
    </recommendedName>
    <alternativeName>
        <fullName evidence="1">Kidney H(+)/peptide cotransporter</fullName>
    </alternativeName>
    <alternativeName>
        <fullName evidence="1">Oligopeptide transporter, kidney isoform</fullName>
    </alternativeName>
    <alternativeName>
        <fullName evidence="9">Peptide transporter 2</fullName>
    </alternativeName>
</protein>
<proteinExistence type="evidence at protein level"/>
<keyword id="KW-1003">Cell membrane</keyword>
<keyword id="KW-0968">Cytoplasmic vesicle</keyword>
<keyword id="KW-0325">Glycoprotein</keyword>
<keyword id="KW-0391">Immunity</keyword>
<keyword id="KW-0399">Innate immunity</keyword>
<keyword id="KW-0472">Membrane</keyword>
<keyword id="KW-0571">Peptide transport</keyword>
<keyword id="KW-0597">Phosphoprotein</keyword>
<keyword id="KW-0653">Protein transport</keyword>
<keyword id="KW-1185">Reference proteome</keyword>
<keyword id="KW-0769">Symport</keyword>
<keyword id="KW-0812">Transmembrane</keyword>
<keyword id="KW-1133">Transmembrane helix</keyword>
<keyword id="KW-0813">Transport</keyword>